<accession>Q70JZ1</accession>
<protein>
    <recommendedName>
        <fullName evidence="1">Biotin synthase</fullName>
        <ecNumber evidence="1">2.8.1.6</ecNumber>
    </recommendedName>
</protein>
<sequence>MNQWMDLAERVLDGAEVTNQEALAILNCPDEDLLLLMHAAFHIRKRFYGKKVKLNMIMNAKSGLCPENCGYCSQSSISKAPIESYRMVDKHILLKGAKRAHDLNIGTYCIVASGRGPSNREVDQVVDAVKEIKETYGLKICACLGLLKPEQAERLKQAGVDRYNHNINTSQRNHSNITTSHTYDDRVNTVETAKQSGMSPCSGVIVGMKETKQDVIDMANSLKALDADSIPVNFLHAIDGTPLEGVSELHPVYCLKVLALFRFINPSKEIRISGGREVNLRSLQPLGLYAANSIFVGDYLTTAGQQETEDHQMLHDLGFEVESVEEMKAGLQSACNTEV</sequence>
<proteinExistence type="inferred from homology"/>
<dbReference type="EC" id="2.8.1.6" evidence="1"/>
<dbReference type="EMBL" id="AJ576102">
    <property type="protein sequence ID" value="CAE11257.1"/>
    <property type="molecule type" value="Genomic_DNA"/>
</dbReference>
<dbReference type="RefSeq" id="WP_007410132.1">
    <property type="nucleotide sequence ID" value="NZ_SUPO01000004.1"/>
</dbReference>
<dbReference type="SMR" id="Q70JZ1"/>
<dbReference type="STRING" id="692420.BAMF_1920"/>
<dbReference type="GeneID" id="93080954"/>
<dbReference type="eggNOG" id="COG0502">
    <property type="taxonomic scope" value="Bacteria"/>
</dbReference>
<dbReference type="UniPathway" id="UPA00078">
    <property type="reaction ID" value="UER00162"/>
</dbReference>
<dbReference type="GO" id="GO:0051537">
    <property type="term" value="F:2 iron, 2 sulfur cluster binding"/>
    <property type="evidence" value="ECO:0007669"/>
    <property type="project" value="UniProtKB-KW"/>
</dbReference>
<dbReference type="GO" id="GO:0051539">
    <property type="term" value="F:4 iron, 4 sulfur cluster binding"/>
    <property type="evidence" value="ECO:0007669"/>
    <property type="project" value="UniProtKB-KW"/>
</dbReference>
<dbReference type="GO" id="GO:0004076">
    <property type="term" value="F:biotin synthase activity"/>
    <property type="evidence" value="ECO:0007669"/>
    <property type="project" value="UniProtKB-UniRule"/>
</dbReference>
<dbReference type="GO" id="GO:0005506">
    <property type="term" value="F:iron ion binding"/>
    <property type="evidence" value="ECO:0007669"/>
    <property type="project" value="UniProtKB-UniRule"/>
</dbReference>
<dbReference type="GO" id="GO:0009102">
    <property type="term" value="P:biotin biosynthetic process"/>
    <property type="evidence" value="ECO:0007669"/>
    <property type="project" value="UniProtKB-UniRule"/>
</dbReference>
<dbReference type="CDD" id="cd01335">
    <property type="entry name" value="Radical_SAM"/>
    <property type="match status" value="1"/>
</dbReference>
<dbReference type="FunFam" id="3.20.20.70:FF:000026">
    <property type="entry name" value="Biotin synthase"/>
    <property type="match status" value="1"/>
</dbReference>
<dbReference type="Gene3D" id="3.20.20.70">
    <property type="entry name" value="Aldolase class I"/>
    <property type="match status" value="1"/>
</dbReference>
<dbReference type="HAMAP" id="MF_01694">
    <property type="entry name" value="BioB"/>
    <property type="match status" value="1"/>
</dbReference>
<dbReference type="InterPro" id="IPR013785">
    <property type="entry name" value="Aldolase_TIM"/>
</dbReference>
<dbReference type="InterPro" id="IPR010722">
    <property type="entry name" value="BATS_dom"/>
</dbReference>
<dbReference type="InterPro" id="IPR002684">
    <property type="entry name" value="Biotin_synth/BioAB"/>
</dbReference>
<dbReference type="InterPro" id="IPR024177">
    <property type="entry name" value="Biotin_synthase"/>
</dbReference>
<dbReference type="InterPro" id="IPR006638">
    <property type="entry name" value="Elp3/MiaA/NifB-like_rSAM"/>
</dbReference>
<dbReference type="InterPro" id="IPR007197">
    <property type="entry name" value="rSAM"/>
</dbReference>
<dbReference type="NCBIfam" id="TIGR00433">
    <property type="entry name" value="bioB"/>
    <property type="match status" value="1"/>
</dbReference>
<dbReference type="PANTHER" id="PTHR22976">
    <property type="entry name" value="BIOTIN SYNTHASE"/>
    <property type="match status" value="1"/>
</dbReference>
<dbReference type="PANTHER" id="PTHR22976:SF2">
    <property type="entry name" value="BIOTIN SYNTHASE, MITOCHONDRIAL"/>
    <property type="match status" value="1"/>
</dbReference>
<dbReference type="Pfam" id="PF06968">
    <property type="entry name" value="BATS"/>
    <property type="match status" value="1"/>
</dbReference>
<dbReference type="Pfam" id="PF04055">
    <property type="entry name" value="Radical_SAM"/>
    <property type="match status" value="1"/>
</dbReference>
<dbReference type="PIRSF" id="PIRSF001619">
    <property type="entry name" value="Biotin_synth"/>
    <property type="match status" value="1"/>
</dbReference>
<dbReference type="SFLD" id="SFLDG01278">
    <property type="entry name" value="biotin_synthase_like"/>
    <property type="match status" value="1"/>
</dbReference>
<dbReference type="SFLD" id="SFLDS00029">
    <property type="entry name" value="Radical_SAM"/>
    <property type="match status" value="1"/>
</dbReference>
<dbReference type="SMART" id="SM00876">
    <property type="entry name" value="BATS"/>
    <property type="match status" value="1"/>
</dbReference>
<dbReference type="SMART" id="SM00729">
    <property type="entry name" value="Elp3"/>
    <property type="match status" value="1"/>
</dbReference>
<dbReference type="SUPFAM" id="SSF102114">
    <property type="entry name" value="Radical SAM enzymes"/>
    <property type="match status" value="1"/>
</dbReference>
<dbReference type="PROSITE" id="PS51918">
    <property type="entry name" value="RADICAL_SAM"/>
    <property type="match status" value="1"/>
</dbReference>
<gene>
    <name evidence="1" type="primary">bioB</name>
</gene>
<feature type="chain" id="PRO_0000381216" description="Biotin synthase">
    <location>
        <begin position="1"/>
        <end position="339"/>
    </location>
</feature>
<feature type="domain" description="Radical SAM core" evidence="2">
    <location>
        <begin position="47"/>
        <end position="276"/>
    </location>
</feature>
<feature type="binding site" evidence="1">
    <location>
        <position position="65"/>
    </location>
    <ligand>
        <name>[4Fe-4S] cluster</name>
        <dbReference type="ChEBI" id="CHEBI:49883"/>
        <note>4Fe-4S-S-AdoMet</note>
    </ligand>
</feature>
<feature type="binding site" evidence="1">
    <location>
        <position position="69"/>
    </location>
    <ligand>
        <name>[4Fe-4S] cluster</name>
        <dbReference type="ChEBI" id="CHEBI:49883"/>
        <note>4Fe-4S-S-AdoMet</note>
    </ligand>
</feature>
<feature type="binding site" evidence="1">
    <location>
        <position position="72"/>
    </location>
    <ligand>
        <name>[4Fe-4S] cluster</name>
        <dbReference type="ChEBI" id="CHEBI:49883"/>
        <note>4Fe-4S-S-AdoMet</note>
    </ligand>
</feature>
<feature type="binding site" evidence="1">
    <location>
        <position position="109"/>
    </location>
    <ligand>
        <name>[2Fe-2S] cluster</name>
        <dbReference type="ChEBI" id="CHEBI:190135"/>
    </ligand>
</feature>
<feature type="binding site" evidence="1">
    <location>
        <position position="141"/>
    </location>
    <ligand>
        <name>[2Fe-2S] cluster</name>
        <dbReference type="ChEBI" id="CHEBI:190135"/>
    </ligand>
</feature>
<feature type="binding site" evidence="1">
    <location>
        <position position="201"/>
    </location>
    <ligand>
        <name>[2Fe-2S] cluster</name>
        <dbReference type="ChEBI" id="CHEBI:190135"/>
    </ligand>
</feature>
<feature type="binding site" evidence="1">
    <location>
        <position position="271"/>
    </location>
    <ligand>
        <name>[2Fe-2S] cluster</name>
        <dbReference type="ChEBI" id="CHEBI:190135"/>
    </ligand>
</feature>
<organism>
    <name type="scientific">Bacillus amyloliquefaciens</name>
    <name type="common">Bacillus velezensis</name>
    <dbReference type="NCBI Taxonomy" id="1390"/>
    <lineage>
        <taxon>Bacteria</taxon>
        <taxon>Bacillati</taxon>
        <taxon>Bacillota</taxon>
        <taxon>Bacilli</taxon>
        <taxon>Bacillales</taxon>
        <taxon>Bacillaceae</taxon>
        <taxon>Bacillus</taxon>
        <taxon>Bacillus amyloliquefaciens group</taxon>
    </lineage>
</organism>
<name>BIOB_BACAM</name>
<keyword id="KW-0001">2Fe-2S</keyword>
<keyword id="KW-0004">4Fe-4S</keyword>
<keyword id="KW-0093">Biotin biosynthesis</keyword>
<keyword id="KW-0408">Iron</keyword>
<keyword id="KW-0411">Iron-sulfur</keyword>
<keyword id="KW-0479">Metal-binding</keyword>
<keyword id="KW-0949">S-adenosyl-L-methionine</keyword>
<keyword id="KW-0808">Transferase</keyword>
<reference key="1">
    <citation type="journal article" date="2004" name="J. Bacteriol.">
        <title>Structural and functional characterization of gene clusters directing nonribosomal synthesis of bioactive cyclic lipopeptides in Bacillus amyloliquefaciens strain FZB42.</title>
        <authorList>
            <person name="Koumoutsi A."/>
            <person name="Chen X.H."/>
            <person name="Henne A."/>
            <person name="Liesegang H."/>
            <person name="Hitzeroth G."/>
            <person name="Franke P."/>
            <person name="Vater J."/>
            <person name="Borriss R."/>
        </authorList>
    </citation>
    <scope>NUCLEOTIDE SEQUENCE [GENOMIC DNA]</scope>
    <source>
        <strain>FZB42</strain>
    </source>
</reference>
<evidence type="ECO:0000255" key="1">
    <source>
        <dbReference type="HAMAP-Rule" id="MF_01694"/>
    </source>
</evidence>
<evidence type="ECO:0000255" key="2">
    <source>
        <dbReference type="PROSITE-ProRule" id="PRU01266"/>
    </source>
</evidence>
<comment type="function">
    <text evidence="1">Catalyzes the conversion of dethiobiotin (DTB) to biotin by the insertion of a sulfur atom into dethiobiotin via a radical-based mechanism.</text>
</comment>
<comment type="catalytic activity">
    <reaction evidence="1">
        <text>(4R,5S)-dethiobiotin + (sulfur carrier)-SH + 2 reduced [2Fe-2S]-[ferredoxin] + 2 S-adenosyl-L-methionine = (sulfur carrier)-H + biotin + 2 5'-deoxyadenosine + 2 L-methionine + 2 oxidized [2Fe-2S]-[ferredoxin]</text>
        <dbReference type="Rhea" id="RHEA:22060"/>
        <dbReference type="Rhea" id="RHEA-COMP:10000"/>
        <dbReference type="Rhea" id="RHEA-COMP:10001"/>
        <dbReference type="Rhea" id="RHEA-COMP:14737"/>
        <dbReference type="Rhea" id="RHEA-COMP:14739"/>
        <dbReference type="ChEBI" id="CHEBI:17319"/>
        <dbReference type="ChEBI" id="CHEBI:29917"/>
        <dbReference type="ChEBI" id="CHEBI:33737"/>
        <dbReference type="ChEBI" id="CHEBI:33738"/>
        <dbReference type="ChEBI" id="CHEBI:57586"/>
        <dbReference type="ChEBI" id="CHEBI:57844"/>
        <dbReference type="ChEBI" id="CHEBI:59789"/>
        <dbReference type="ChEBI" id="CHEBI:64428"/>
        <dbReference type="ChEBI" id="CHEBI:149473"/>
        <dbReference type="EC" id="2.8.1.6"/>
    </reaction>
</comment>
<comment type="cofactor">
    <cofactor evidence="1">
        <name>[4Fe-4S] cluster</name>
        <dbReference type="ChEBI" id="CHEBI:49883"/>
    </cofactor>
    <text evidence="1">Binds 1 [4Fe-4S] cluster. The cluster is coordinated with 3 cysteines and an exchangeable S-adenosyl-L-methionine.</text>
</comment>
<comment type="cofactor">
    <cofactor evidence="1">
        <name>[2Fe-2S] cluster</name>
        <dbReference type="ChEBI" id="CHEBI:190135"/>
    </cofactor>
    <text evidence="1">Binds 1 [2Fe-2S] cluster. The cluster is coordinated with 3 cysteines and 1 arginine.</text>
</comment>
<comment type="pathway">
    <text evidence="1">Cofactor biosynthesis; biotin biosynthesis; biotin from 7,8-diaminononanoate: step 2/2.</text>
</comment>
<comment type="subunit">
    <text evidence="1">Homodimer.</text>
</comment>
<comment type="similarity">
    <text evidence="1">Belongs to the radical SAM superfamily. Biotin synthase family.</text>
</comment>